<feature type="chain" id="PRO_0000229217" description="Ribosome maturation factor RimP">
    <location>
        <begin position="1"/>
        <end position="156"/>
    </location>
</feature>
<name>RIMP_SHOC1</name>
<evidence type="ECO:0000255" key="1">
    <source>
        <dbReference type="HAMAP-Rule" id="MF_01077"/>
    </source>
</evidence>
<gene>
    <name evidence="1" type="primary">rimP</name>
    <name type="ordered locus">ABC2232</name>
</gene>
<organism>
    <name type="scientific">Shouchella clausii (strain KSM-K16)</name>
    <name type="common">Alkalihalobacillus clausii</name>
    <dbReference type="NCBI Taxonomy" id="66692"/>
    <lineage>
        <taxon>Bacteria</taxon>
        <taxon>Bacillati</taxon>
        <taxon>Bacillota</taxon>
        <taxon>Bacilli</taxon>
        <taxon>Bacillales</taxon>
        <taxon>Bacillaceae</taxon>
        <taxon>Shouchella</taxon>
    </lineage>
</organism>
<keyword id="KW-0963">Cytoplasm</keyword>
<keyword id="KW-1185">Reference proteome</keyword>
<keyword id="KW-0690">Ribosome biogenesis</keyword>
<dbReference type="EMBL" id="AP006627">
    <property type="protein sequence ID" value="BAD64767.1"/>
    <property type="molecule type" value="Genomic_DNA"/>
</dbReference>
<dbReference type="RefSeq" id="WP_011247075.1">
    <property type="nucleotide sequence ID" value="NC_006582.1"/>
</dbReference>
<dbReference type="SMR" id="Q5WFT8"/>
<dbReference type="STRING" id="66692.ABC2232"/>
<dbReference type="KEGG" id="bcl:ABC2232"/>
<dbReference type="eggNOG" id="COG0779">
    <property type="taxonomic scope" value="Bacteria"/>
</dbReference>
<dbReference type="HOGENOM" id="CLU_070525_2_0_9"/>
<dbReference type="OrthoDB" id="9805006at2"/>
<dbReference type="Proteomes" id="UP000001168">
    <property type="component" value="Chromosome"/>
</dbReference>
<dbReference type="GO" id="GO:0005829">
    <property type="term" value="C:cytosol"/>
    <property type="evidence" value="ECO:0007669"/>
    <property type="project" value="TreeGrafter"/>
</dbReference>
<dbReference type="GO" id="GO:0000028">
    <property type="term" value="P:ribosomal small subunit assembly"/>
    <property type="evidence" value="ECO:0007669"/>
    <property type="project" value="TreeGrafter"/>
</dbReference>
<dbReference type="GO" id="GO:0006412">
    <property type="term" value="P:translation"/>
    <property type="evidence" value="ECO:0007669"/>
    <property type="project" value="TreeGrafter"/>
</dbReference>
<dbReference type="CDD" id="cd01734">
    <property type="entry name" value="YlxS_C"/>
    <property type="match status" value="1"/>
</dbReference>
<dbReference type="FunFam" id="3.30.300.70:FF:000001">
    <property type="entry name" value="Ribosome maturation factor RimP"/>
    <property type="match status" value="1"/>
</dbReference>
<dbReference type="Gene3D" id="2.30.30.180">
    <property type="entry name" value="Ribosome maturation factor RimP, C-terminal domain"/>
    <property type="match status" value="1"/>
</dbReference>
<dbReference type="Gene3D" id="3.30.300.70">
    <property type="entry name" value="RimP-like superfamily, N-terminal"/>
    <property type="match status" value="1"/>
</dbReference>
<dbReference type="HAMAP" id="MF_01077">
    <property type="entry name" value="RimP"/>
    <property type="match status" value="1"/>
</dbReference>
<dbReference type="InterPro" id="IPR003728">
    <property type="entry name" value="Ribosome_maturation_RimP"/>
</dbReference>
<dbReference type="InterPro" id="IPR028998">
    <property type="entry name" value="RimP_C"/>
</dbReference>
<dbReference type="InterPro" id="IPR036847">
    <property type="entry name" value="RimP_C_sf"/>
</dbReference>
<dbReference type="InterPro" id="IPR028989">
    <property type="entry name" value="RimP_N"/>
</dbReference>
<dbReference type="InterPro" id="IPR035956">
    <property type="entry name" value="RimP_N_sf"/>
</dbReference>
<dbReference type="NCBIfam" id="NF000928">
    <property type="entry name" value="PRK00092.1-2"/>
    <property type="match status" value="1"/>
</dbReference>
<dbReference type="PANTHER" id="PTHR33867">
    <property type="entry name" value="RIBOSOME MATURATION FACTOR RIMP"/>
    <property type="match status" value="1"/>
</dbReference>
<dbReference type="PANTHER" id="PTHR33867:SF1">
    <property type="entry name" value="RIBOSOME MATURATION FACTOR RIMP"/>
    <property type="match status" value="1"/>
</dbReference>
<dbReference type="Pfam" id="PF17384">
    <property type="entry name" value="DUF150_C"/>
    <property type="match status" value="1"/>
</dbReference>
<dbReference type="Pfam" id="PF02576">
    <property type="entry name" value="RimP_N"/>
    <property type="match status" value="1"/>
</dbReference>
<dbReference type="SUPFAM" id="SSF74942">
    <property type="entry name" value="YhbC-like, C-terminal domain"/>
    <property type="match status" value="1"/>
</dbReference>
<dbReference type="SUPFAM" id="SSF75420">
    <property type="entry name" value="YhbC-like, N-terminal domain"/>
    <property type="match status" value="1"/>
</dbReference>
<reference key="1">
    <citation type="submission" date="2003-10" db="EMBL/GenBank/DDBJ databases">
        <title>The complete genome sequence of the alkaliphilic Bacillus clausii KSM-K16.</title>
        <authorList>
            <person name="Takaki Y."/>
            <person name="Kageyama Y."/>
            <person name="Shimamura S."/>
            <person name="Suzuki H."/>
            <person name="Nishi S."/>
            <person name="Hatada Y."/>
            <person name="Kawai S."/>
            <person name="Ito S."/>
            <person name="Horikoshi K."/>
        </authorList>
    </citation>
    <scope>NUCLEOTIDE SEQUENCE [LARGE SCALE GENOMIC DNA]</scope>
    <source>
        <strain>KSM-K16</strain>
    </source>
</reference>
<proteinExistence type="inferred from homology"/>
<protein>
    <recommendedName>
        <fullName evidence="1">Ribosome maturation factor RimP</fullName>
    </recommendedName>
</protein>
<sequence>MSKNVSRTVEQLAEPIVRELHLELVEVEYKKEGPNWYLRVFIDADRGVNLDDCEAVSEKLSEVLDEVDPIKEAYFLEVSSPGAERPLKKEADVKKAVGKGVYVTTYEPIDGQKAFEGVLVSFEDATLVIEGKNKTRTVTYTVPYAKVANARLSILL</sequence>
<accession>Q5WFT8</accession>
<comment type="function">
    <text evidence="1">Required for maturation of 30S ribosomal subunits.</text>
</comment>
<comment type="subcellular location">
    <subcellularLocation>
        <location evidence="1">Cytoplasm</location>
    </subcellularLocation>
</comment>
<comment type="similarity">
    <text evidence="1">Belongs to the RimP family.</text>
</comment>